<dbReference type="EC" id="6.3.4.-" evidence="1"/>
<dbReference type="EMBL" id="AE000512">
    <property type="protein sequence ID" value="AAD36580.1"/>
    <property type="molecule type" value="Genomic_DNA"/>
</dbReference>
<dbReference type="PIR" id="B72245">
    <property type="entry name" value="B72245"/>
</dbReference>
<dbReference type="RefSeq" id="NP_229313.1">
    <property type="nucleotide sequence ID" value="NC_000853.1"/>
</dbReference>
<dbReference type="RefSeq" id="WP_004081862.1">
    <property type="nucleotide sequence ID" value="NC_000853.1"/>
</dbReference>
<dbReference type="PDB" id="5Y0R">
    <property type="method" value="X-ray"/>
    <property type="resolution" value="3.11 A"/>
    <property type="chains" value="A=1-418"/>
</dbReference>
<dbReference type="PDB" id="5Y0S">
    <property type="method" value="X-ray"/>
    <property type="resolution" value="2.10 A"/>
    <property type="chains" value="A/B/C/D=1-418"/>
</dbReference>
<dbReference type="PDB" id="5Y0T">
    <property type="method" value="X-ray"/>
    <property type="resolution" value="1.90 A"/>
    <property type="chains" value="A/B/C/D=1-418"/>
</dbReference>
<dbReference type="PDBsum" id="5Y0R"/>
<dbReference type="PDBsum" id="5Y0S"/>
<dbReference type="PDBsum" id="5Y0T"/>
<dbReference type="SMR" id="Q9X1K1"/>
<dbReference type="FunCoup" id="Q9X1K1">
    <property type="interactions" value="11"/>
</dbReference>
<dbReference type="STRING" id="243274.TM_1513"/>
<dbReference type="PaxDb" id="243274-THEMA_06735"/>
<dbReference type="EnsemblBacteria" id="AAD36580">
    <property type="protein sequence ID" value="AAD36580"/>
    <property type="gene ID" value="TM_1513"/>
</dbReference>
<dbReference type="KEGG" id="tma:TM1513"/>
<dbReference type="KEGG" id="tmm:Tmari_1521"/>
<dbReference type="KEGG" id="tmw:THMA_1545"/>
<dbReference type="eggNOG" id="COG1323">
    <property type="taxonomic scope" value="Bacteria"/>
</dbReference>
<dbReference type="InParanoid" id="Q9X1K1"/>
<dbReference type="OrthoDB" id="9769796at2"/>
<dbReference type="Proteomes" id="UP000008183">
    <property type="component" value="Chromosome"/>
</dbReference>
<dbReference type="GO" id="GO:0005737">
    <property type="term" value="C:cytoplasm"/>
    <property type="evidence" value="ECO:0007669"/>
    <property type="project" value="UniProtKB-SubCell"/>
</dbReference>
<dbReference type="GO" id="GO:0005524">
    <property type="term" value="F:ATP binding"/>
    <property type="evidence" value="ECO:0007669"/>
    <property type="project" value="UniProtKB-KW"/>
</dbReference>
<dbReference type="GO" id="GO:0016879">
    <property type="term" value="F:ligase activity, forming carbon-nitrogen bonds"/>
    <property type="evidence" value="ECO:0007669"/>
    <property type="project" value="UniProtKB-UniRule"/>
</dbReference>
<dbReference type="GO" id="GO:0000049">
    <property type="term" value="F:tRNA binding"/>
    <property type="evidence" value="ECO:0007669"/>
    <property type="project" value="UniProtKB-KW"/>
</dbReference>
<dbReference type="GO" id="GO:0006400">
    <property type="term" value="P:tRNA modification"/>
    <property type="evidence" value="ECO:0007669"/>
    <property type="project" value="UniProtKB-UniRule"/>
</dbReference>
<dbReference type="Gene3D" id="3.40.50.620">
    <property type="entry name" value="HUPs"/>
    <property type="match status" value="1"/>
</dbReference>
<dbReference type="HAMAP" id="MF_01539">
    <property type="entry name" value="TmcAL"/>
    <property type="match status" value="1"/>
</dbReference>
<dbReference type="InterPro" id="IPR014729">
    <property type="entry name" value="Rossmann-like_a/b/a_fold"/>
</dbReference>
<dbReference type="InterPro" id="IPR008513">
    <property type="entry name" value="tRNA(Met)_cyd_acetate_ligase"/>
</dbReference>
<dbReference type="NCBIfam" id="NF010191">
    <property type="entry name" value="PRK13670.1"/>
    <property type="match status" value="1"/>
</dbReference>
<dbReference type="PANTHER" id="PTHR37825">
    <property type="entry name" value="TRNA(MET) CYTIDINE ACETATE LIGASE"/>
    <property type="match status" value="1"/>
</dbReference>
<dbReference type="PANTHER" id="PTHR37825:SF1">
    <property type="entry name" value="TRNA(MET) CYTIDINE ACETATE LIGASE"/>
    <property type="match status" value="1"/>
</dbReference>
<dbReference type="Pfam" id="PF05636">
    <property type="entry name" value="HIGH_NTase1"/>
    <property type="match status" value="1"/>
</dbReference>
<dbReference type="SUPFAM" id="SSF52374">
    <property type="entry name" value="Nucleotidylyl transferase"/>
    <property type="match status" value="1"/>
</dbReference>
<sequence length="418" mass="48592">MEYNPFHNGHLYHLTSARELVKPDYTIAVMSGNFCQRGEPAVIDKFARAEIALRMGVDVVLELPVVFATQDAGGFAFGAVCVLDATGVVTDVVFGSESNDIEFLQRVARILYEQPDEYQKFLHEELKKGYSFPNARKYALMRYFSMKGWNEEEVLKLEKSNDILGVEYIHSALKIGSNIRFHTIKRVGAEEKDTSFRGRFSSATAIRNLMREKRWEEVRDSLPEDSFEILMREINEGRGPVFLENMGDFLLSFFRLKNMDFFEKIHGFSEGLEKRFHVCARQTGSYRDFLECVKAKRFTFSRIRRLALFSVFEVNKEFVEKSNTKGPQYIRILGFTEKGREILSLMRKKAKLPIVTNMSLYRKVLEKTDLPVDKQLFLEQIDLDVKATNFYSMFFPSVEQRCGERDFSIHPIFLRTEM</sequence>
<comment type="function">
    <text evidence="1">Catalyzes the formation of N(4)-acetylcytidine (ac(4)C) at the wobble position of elongator tRNA(Met), using acetate and ATP as substrates. First activates an acetate ion to form acetyladenylate (Ac-AMP) and then transfers the acetyl group to tRNA to form ac(4)C34.</text>
</comment>
<comment type="catalytic activity">
    <reaction evidence="1">
        <text>cytidine(34) in elongator tRNA(Met) + acetate + ATP = N(4)-acetylcytidine(34) in elongator tRNA(Met) + AMP + diphosphate</text>
        <dbReference type="Rhea" id="RHEA:58144"/>
        <dbReference type="Rhea" id="RHEA-COMP:10693"/>
        <dbReference type="Rhea" id="RHEA-COMP:10694"/>
        <dbReference type="ChEBI" id="CHEBI:30089"/>
        <dbReference type="ChEBI" id="CHEBI:30616"/>
        <dbReference type="ChEBI" id="CHEBI:33019"/>
        <dbReference type="ChEBI" id="CHEBI:74900"/>
        <dbReference type="ChEBI" id="CHEBI:82748"/>
        <dbReference type="ChEBI" id="CHEBI:456215"/>
    </reaction>
</comment>
<comment type="subcellular location">
    <subcellularLocation>
        <location evidence="1">Cytoplasm</location>
    </subcellularLocation>
</comment>
<comment type="similarity">
    <text evidence="1">Belongs to the TmcAL family.</text>
</comment>
<protein>
    <recommendedName>
        <fullName evidence="1">tRNA(Met) cytidine acetate ligase</fullName>
        <ecNumber evidence="1">6.3.4.-</ecNumber>
    </recommendedName>
</protein>
<evidence type="ECO:0000255" key="1">
    <source>
        <dbReference type="HAMAP-Rule" id="MF_01539"/>
    </source>
</evidence>
<evidence type="ECO:0007829" key="2">
    <source>
        <dbReference type="PDB" id="5Y0T"/>
    </source>
</evidence>
<accession>Q9X1K1</accession>
<feature type="chain" id="PRO_0000147197" description="tRNA(Met) cytidine acetate ligase">
    <location>
        <begin position="1"/>
        <end position="418"/>
    </location>
</feature>
<feature type="binding site" evidence="1">
    <location>
        <position position="95"/>
    </location>
    <ligand>
        <name>ATP</name>
        <dbReference type="ChEBI" id="CHEBI:30616"/>
    </ligand>
</feature>
<feature type="binding site" evidence="1">
    <location>
        <position position="161"/>
    </location>
    <ligand>
        <name>ATP</name>
        <dbReference type="ChEBI" id="CHEBI:30616"/>
    </ligand>
</feature>
<feature type="binding site" evidence="1">
    <location>
        <position position="186"/>
    </location>
    <ligand>
        <name>ATP</name>
        <dbReference type="ChEBI" id="CHEBI:30616"/>
    </ligand>
</feature>
<feature type="helix" evidence="2">
    <location>
        <begin position="8"/>
        <end position="21"/>
    </location>
</feature>
<feature type="strand" evidence="2">
    <location>
        <begin position="24"/>
        <end position="31"/>
    </location>
</feature>
<feature type="helix" evidence="2">
    <location>
        <begin position="45"/>
        <end position="54"/>
    </location>
</feature>
<feature type="strand" evidence="2">
    <location>
        <begin position="58"/>
        <end position="63"/>
    </location>
</feature>
<feature type="helix" evidence="2">
    <location>
        <begin position="65"/>
        <end position="68"/>
    </location>
</feature>
<feature type="helix" evidence="2">
    <location>
        <begin position="72"/>
        <end position="85"/>
    </location>
</feature>
<feature type="strand" evidence="2">
    <location>
        <begin position="91"/>
        <end position="98"/>
    </location>
</feature>
<feature type="helix" evidence="2">
    <location>
        <begin position="101"/>
        <end position="113"/>
    </location>
</feature>
<feature type="helix" evidence="2">
    <location>
        <begin position="116"/>
        <end position="127"/>
    </location>
</feature>
<feature type="helix" evidence="2">
    <location>
        <begin position="132"/>
        <end position="146"/>
    </location>
</feature>
<feature type="helix" evidence="2">
    <location>
        <begin position="151"/>
        <end position="158"/>
    </location>
</feature>
<feature type="helix" evidence="2">
    <location>
        <begin position="160"/>
        <end position="175"/>
    </location>
</feature>
<feature type="strand" evidence="2">
    <location>
        <begin position="180"/>
        <end position="185"/>
    </location>
</feature>
<feature type="helix" evidence="2">
    <location>
        <begin position="203"/>
        <end position="211"/>
    </location>
</feature>
<feature type="helix" evidence="2">
    <location>
        <begin position="215"/>
        <end position="221"/>
    </location>
</feature>
<feature type="helix" evidence="2">
    <location>
        <begin position="224"/>
        <end position="235"/>
    </location>
</feature>
<feature type="helix" evidence="2">
    <location>
        <begin position="243"/>
        <end position="246"/>
    </location>
</feature>
<feature type="helix" evidence="2">
    <location>
        <begin position="247"/>
        <end position="254"/>
    </location>
</feature>
<feature type="helix" evidence="2">
    <location>
        <begin position="259"/>
        <end position="263"/>
    </location>
</feature>
<feature type="helix" evidence="2">
    <location>
        <begin position="272"/>
        <end position="282"/>
    </location>
</feature>
<feature type="helix" evidence="2">
    <location>
        <begin position="286"/>
        <end position="293"/>
    </location>
</feature>
<feature type="helix" evidence="2">
    <location>
        <begin position="300"/>
        <end position="311"/>
    </location>
</feature>
<feature type="helix" evidence="2">
    <location>
        <begin position="316"/>
        <end position="325"/>
    </location>
</feature>
<feature type="strand" evidence="2">
    <location>
        <begin position="330"/>
        <end position="336"/>
    </location>
</feature>
<feature type="helix" evidence="2">
    <location>
        <begin position="339"/>
        <end position="349"/>
    </location>
</feature>
<feature type="strand" evidence="2">
    <location>
        <begin position="354"/>
        <end position="356"/>
    </location>
</feature>
<feature type="helix" evidence="2">
    <location>
        <begin position="358"/>
        <end position="360"/>
    </location>
</feature>
<feature type="helix" evidence="2">
    <location>
        <begin position="361"/>
        <end position="367"/>
    </location>
</feature>
<feature type="helix" evidence="2">
    <location>
        <begin position="374"/>
        <end position="392"/>
    </location>
</feature>
<feature type="strand" evidence="2">
    <location>
        <begin position="395"/>
        <end position="397"/>
    </location>
</feature>
<feature type="helix" evidence="2">
    <location>
        <begin position="398"/>
        <end position="400"/>
    </location>
</feature>
<feature type="helix" evidence="2">
    <location>
        <begin position="405"/>
        <end position="408"/>
    </location>
</feature>
<feature type="strand" evidence="2">
    <location>
        <begin position="412"/>
        <end position="414"/>
    </location>
</feature>
<reference key="1">
    <citation type="journal article" date="1999" name="Nature">
        <title>Evidence for lateral gene transfer between Archaea and Bacteria from genome sequence of Thermotoga maritima.</title>
        <authorList>
            <person name="Nelson K.E."/>
            <person name="Clayton R.A."/>
            <person name="Gill S.R."/>
            <person name="Gwinn M.L."/>
            <person name="Dodson R.J."/>
            <person name="Haft D.H."/>
            <person name="Hickey E.K."/>
            <person name="Peterson J.D."/>
            <person name="Nelson W.C."/>
            <person name="Ketchum K.A."/>
            <person name="McDonald L.A."/>
            <person name="Utterback T.R."/>
            <person name="Malek J.A."/>
            <person name="Linher K.D."/>
            <person name="Garrett M.M."/>
            <person name="Stewart A.M."/>
            <person name="Cotton M.D."/>
            <person name="Pratt M.S."/>
            <person name="Phillips C.A."/>
            <person name="Richardson D.L."/>
            <person name="Heidelberg J.F."/>
            <person name="Sutton G.G."/>
            <person name="Fleischmann R.D."/>
            <person name="Eisen J.A."/>
            <person name="White O."/>
            <person name="Salzberg S.L."/>
            <person name="Smith H.O."/>
            <person name="Venter J.C."/>
            <person name="Fraser C.M."/>
        </authorList>
    </citation>
    <scope>NUCLEOTIDE SEQUENCE [LARGE SCALE GENOMIC DNA]</scope>
    <source>
        <strain>ATCC 43589 / DSM 3109 / JCM 10099 / NBRC 100826 / MSB8</strain>
    </source>
</reference>
<proteinExistence type="evidence at protein level"/>
<name>TMCAL_THEMA</name>
<keyword id="KW-0002">3D-structure</keyword>
<keyword id="KW-0067">ATP-binding</keyword>
<keyword id="KW-0963">Cytoplasm</keyword>
<keyword id="KW-0436">Ligase</keyword>
<keyword id="KW-0547">Nucleotide-binding</keyword>
<keyword id="KW-1185">Reference proteome</keyword>
<keyword id="KW-0694">RNA-binding</keyword>
<keyword id="KW-0819">tRNA processing</keyword>
<keyword id="KW-0820">tRNA-binding</keyword>
<organism>
    <name type="scientific">Thermotoga maritima (strain ATCC 43589 / DSM 3109 / JCM 10099 / NBRC 100826 / MSB8)</name>
    <dbReference type="NCBI Taxonomy" id="243274"/>
    <lineage>
        <taxon>Bacteria</taxon>
        <taxon>Thermotogati</taxon>
        <taxon>Thermotogota</taxon>
        <taxon>Thermotogae</taxon>
        <taxon>Thermotogales</taxon>
        <taxon>Thermotogaceae</taxon>
        <taxon>Thermotoga</taxon>
    </lineage>
</organism>
<gene>
    <name evidence="1" type="primary">tmcAL</name>
    <name type="ordered locus">TM_1513</name>
</gene>